<sequence>MSPDAIRVVVCGDDAVGKSSLITSLIKETIIEPQTNNVLPPITISRNDYIESSQEYLNDQDHHHHHQSSPSTMKNKRKHNNKRERERERESSINNVQPNEISEYIPNITTIIDTSSSDMTNLQKELKRADVIWLVYSDHYTYERISLHWMPLFRSMGVNLPIILCANKSDLFPKSKSNLKSTNSDEFVPLINEFKEIEAGVRCSAKNNYNVVEAFYLCQRAVTHPISPIFDAKEGNLKPGAIKPLKRIFWLSDTDQDGYLNFEELSELHKKCFGIEASKSDYEEIVNLIDQKILPSYNTTIETQTPPQQQHLATSAGTPNGTTTTTSKGISEDGFILLNKIYAESGRHETVWCILRAYHYTNSLSLSDKFLYPRLDVNPHSSVELSPTGYKFFVDLFIKFDKDNDGGLNEDELNTLFRSTPGIPKLWVESNFPSSIVCNEEGYVTLQGWLAQWNLTTFLSYKTTLEYLAYLGFDEGNSTKALKVTKPRKIRQKNGKTYRNAVNDRNVFNCFIVGAPKAGKSSLLESFLHGSYSDIYSPTIQPRLVVKDIELRGGKQCYLILEELGELEPAILENKSRLDQCDVICYAYDSSDPESFQYLVELREKHGHLLDEVPAVFVALKADLDKQQQRCDVQPENYTRDLFLNSPLHVSLAWNSSLHEMFIQLVDAAKTPSSATPGIELEVSVDQDDIKHIIMTGAAIAVVGLVSIWVLNSLRR</sequence>
<protein>
    <recommendedName>
        <fullName>Mitochondrial Rho GTPase 1</fullName>
        <ecNumber>3.6.5.-</ecNumber>
    </recommendedName>
    <alternativeName>
        <fullName>GTPase EF-hand protein of mitochondria 1</fullName>
    </alternativeName>
</protein>
<dbReference type="EC" id="3.6.5.-"/>
<dbReference type="EMBL" id="CP017623">
    <property type="protein sequence ID" value="AOW25786.1"/>
    <property type="molecule type" value="Genomic_DNA"/>
</dbReference>
<dbReference type="RefSeq" id="XP_718978.1">
    <property type="nucleotide sequence ID" value="XM_713885.2"/>
</dbReference>
<dbReference type="SMR" id="Q5ABR2"/>
<dbReference type="FunCoup" id="Q5ABR2">
    <property type="interactions" value="829"/>
</dbReference>
<dbReference type="STRING" id="237561.Q5ABR2"/>
<dbReference type="EnsemblFungi" id="C1_00890W_A-T">
    <property type="protein sequence ID" value="C1_00890W_A-T-p1"/>
    <property type="gene ID" value="C1_00890W_A"/>
</dbReference>
<dbReference type="GeneID" id="3639354"/>
<dbReference type="KEGG" id="cal:CAALFM_C100890WA"/>
<dbReference type="CGD" id="CAL0000185710">
    <property type="gene designation" value="GEM1"/>
</dbReference>
<dbReference type="VEuPathDB" id="FungiDB:C1_00890W_A"/>
<dbReference type="eggNOG" id="KOG1707">
    <property type="taxonomic scope" value="Eukaryota"/>
</dbReference>
<dbReference type="HOGENOM" id="CLU_014255_3_0_1"/>
<dbReference type="InParanoid" id="Q5ABR2"/>
<dbReference type="OrthoDB" id="10020961at2759"/>
<dbReference type="PRO" id="PR:Q5ABR2"/>
<dbReference type="Proteomes" id="UP000000559">
    <property type="component" value="Chromosome 1"/>
</dbReference>
<dbReference type="GO" id="GO:0032865">
    <property type="term" value="C:ERMES complex"/>
    <property type="evidence" value="ECO:0007669"/>
    <property type="project" value="EnsemblFungi"/>
</dbReference>
<dbReference type="GO" id="GO:0005741">
    <property type="term" value="C:mitochondrial outer membrane"/>
    <property type="evidence" value="ECO:0000318"/>
    <property type="project" value="GO_Central"/>
</dbReference>
<dbReference type="GO" id="GO:0005509">
    <property type="term" value="F:calcium ion binding"/>
    <property type="evidence" value="ECO:0007669"/>
    <property type="project" value="EnsemblFungi"/>
</dbReference>
<dbReference type="GO" id="GO:0005525">
    <property type="term" value="F:GTP binding"/>
    <property type="evidence" value="ECO:0000318"/>
    <property type="project" value="GO_Central"/>
</dbReference>
<dbReference type="GO" id="GO:0003924">
    <property type="term" value="F:GTPase activity"/>
    <property type="evidence" value="ECO:0000318"/>
    <property type="project" value="GO_Central"/>
</dbReference>
<dbReference type="GO" id="GO:0015886">
    <property type="term" value="P:heme transport"/>
    <property type="evidence" value="ECO:0007669"/>
    <property type="project" value="EnsemblFungi"/>
</dbReference>
<dbReference type="GO" id="GO:0000001">
    <property type="term" value="P:mitochondrion inheritance"/>
    <property type="evidence" value="ECO:0007669"/>
    <property type="project" value="EnsemblFungi"/>
</dbReference>
<dbReference type="GO" id="GO:0007005">
    <property type="term" value="P:mitochondrion organization"/>
    <property type="evidence" value="ECO:0000315"/>
    <property type="project" value="CGD"/>
</dbReference>
<dbReference type="GO" id="GO:1990456">
    <property type="term" value="P:mitochondrion-endoplasmic reticulum membrane tethering"/>
    <property type="evidence" value="ECO:0007669"/>
    <property type="project" value="EnsemblFungi"/>
</dbReference>
<dbReference type="GO" id="GO:0055091">
    <property type="term" value="P:phospholipid homeostasis"/>
    <property type="evidence" value="ECO:0007669"/>
    <property type="project" value="EnsemblFungi"/>
</dbReference>
<dbReference type="GO" id="GO:1900428">
    <property type="term" value="P:regulation of filamentous growth of a population of unicellular organisms"/>
    <property type="evidence" value="ECO:0000315"/>
    <property type="project" value="CGD"/>
</dbReference>
<dbReference type="GO" id="GO:0060237">
    <property type="term" value="P:regulation of fungal-type cell wall organization"/>
    <property type="evidence" value="ECO:0000315"/>
    <property type="project" value="CGD"/>
</dbReference>
<dbReference type="GO" id="GO:0010821">
    <property type="term" value="P:regulation of mitochondrion organization"/>
    <property type="evidence" value="ECO:0007669"/>
    <property type="project" value="EnsemblFungi"/>
</dbReference>
<dbReference type="CDD" id="cd01892">
    <property type="entry name" value="Miro2"/>
    <property type="match status" value="1"/>
</dbReference>
<dbReference type="FunFam" id="1.10.238.10:FF:000185">
    <property type="entry name" value="Mitochondrial Rho GTPase"/>
    <property type="match status" value="1"/>
</dbReference>
<dbReference type="FunFam" id="3.40.50.300:FF:000553">
    <property type="entry name" value="Mitochondrial Rho GTPase"/>
    <property type="match status" value="1"/>
</dbReference>
<dbReference type="Gene3D" id="1.10.238.10">
    <property type="entry name" value="EF-hand"/>
    <property type="match status" value="2"/>
</dbReference>
<dbReference type="Gene3D" id="3.40.50.300">
    <property type="entry name" value="P-loop containing nucleotide triphosphate hydrolases"/>
    <property type="match status" value="2"/>
</dbReference>
<dbReference type="InterPro" id="IPR011992">
    <property type="entry name" value="EF-hand-dom_pair"/>
</dbReference>
<dbReference type="InterPro" id="IPR018247">
    <property type="entry name" value="EF_Hand_1_Ca_BS"/>
</dbReference>
<dbReference type="InterPro" id="IPR013566">
    <property type="entry name" value="EF_hand_assoc_1"/>
</dbReference>
<dbReference type="InterPro" id="IPR013567">
    <property type="entry name" value="EF_hand_assoc_2"/>
</dbReference>
<dbReference type="InterPro" id="IPR002048">
    <property type="entry name" value="EF_hand_dom"/>
</dbReference>
<dbReference type="InterPro" id="IPR021181">
    <property type="entry name" value="Miro"/>
</dbReference>
<dbReference type="InterPro" id="IPR052266">
    <property type="entry name" value="Miro-EF-hand_domain"/>
</dbReference>
<dbReference type="InterPro" id="IPR020860">
    <property type="entry name" value="MIRO_dom"/>
</dbReference>
<dbReference type="InterPro" id="IPR027417">
    <property type="entry name" value="P-loop_NTPase"/>
</dbReference>
<dbReference type="InterPro" id="IPR001806">
    <property type="entry name" value="Small_GTPase"/>
</dbReference>
<dbReference type="PANTHER" id="PTHR46819">
    <property type="entry name" value="EF-HAND CALCIUM-BINDING DOMAIN-CONTAINING PROTEIN 7"/>
    <property type="match status" value="1"/>
</dbReference>
<dbReference type="PANTHER" id="PTHR46819:SF1">
    <property type="entry name" value="EF-HAND CALCIUM-BINDING DOMAIN-CONTAINING PROTEIN 7"/>
    <property type="match status" value="1"/>
</dbReference>
<dbReference type="Pfam" id="PF13202">
    <property type="entry name" value="EF-hand_5"/>
    <property type="match status" value="1"/>
</dbReference>
<dbReference type="Pfam" id="PF08355">
    <property type="entry name" value="EF_assoc_1"/>
    <property type="match status" value="1"/>
</dbReference>
<dbReference type="Pfam" id="PF08356">
    <property type="entry name" value="EF_assoc_2"/>
    <property type="match status" value="1"/>
</dbReference>
<dbReference type="Pfam" id="PF00071">
    <property type="entry name" value="Ras"/>
    <property type="match status" value="2"/>
</dbReference>
<dbReference type="PIRSF" id="PIRSF037488">
    <property type="entry name" value="Mt_Rho_GTPase"/>
    <property type="match status" value="1"/>
</dbReference>
<dbReference type="PRINTS" id="PR00449">
    <property type="entry name" value="RASTRNSFRMNG"/>
</dbReference>
<dbReference type="SMART" id="SM00054">
    <property type="entry name" value="EFh"/>
    <property type="match status" value="2"/>
</dbReference>
<dbReference type="SMART" id="SM00173">
    <property type="entry name" value="RAS"/>
    <property type="match status" value="1"/>
</dbReference>
<dbReference type="SMART" id="SM00174">
    <property type="entry name" value="RHO"/>
    <property type="match status" value="1"/>
</dbReference>
<dbReference type="SUPFAM" id="SSF47473">
    <property type="entry name" value="EF-hand"/>
    <property type="match status" value="1"/>
</dbReference>
<dbReference type="SUPFAM" id="SSF52540">
    <property type="entry name" value="P-loop containing nucleoside triphosphate hydrolases"/>
    <property type="match status" value="2"/>
</dbReference>
<dbReference type="PROSITE" id="PS00018">
    <property type="entry name" value="EF_HAND_1"/>
    <property type="match status" value="1"/>
</dbReference>
<dbReference type="PROSITE" id="PS50222">
    <property type="entry name" value="EF_HAND_2"/>
    <property type="match status" value="2"/>
</dbReference>
<dbReference type="PROSITE" id="PS51423">
    <property type="entry name" value="MIRO"/>
    <property type="match status" value="2"/>
</dbReference>
<name>GEM1_CANAL</name>
<proteinExistence type="inferred from homology"/>
<gene>
    <name type="primary">GEM1</name>
    <name type="ordered locus">CAALFM_C100890WA</name>
    <name type="ORF">CaO19.13437</name>
    <name type="ORF">CaO19.6016</name>
</gene>
<comment type="function">
    <text evidence="1">Mitochondrial GTPase involved in mitochondrial trafficking. Probably involved in control of anterograde transport of mitochondria and their subcellular distribution.</text>
</comment>
<comment type="subcellular location">
    <subcellularLocation>
        <location evidence="1">Mitochondrion outer membrane</location>
        <topology evidence="1">Single-pass type IV membrane protein</topology>
    </subcellularLocation>
</comment>
<comment type="similarity">
    <text evidence="4 6">Belongs to the mitochondrial Rho GTPase family.</text>
</comment>
<feature type="chain" id="PRO_0000239332" description="Mitochondrial Rho GTPase 1">
    <location>
        <begin position="1"/>
        <end position="716"/>
    </location>
</feature>
<feature type="topological domain" description="Cytoplasmic" evidence="2">
    <location>
        <begin position="1"/>
        <end position="692"/>
    </location>
</feature>
<feature type="transmembrane region" description="Helical; Anchor for type IV membrane protein" evidence="2">
    <location>
        <begin position="693"/>
        <end position="713"/>
    </location>
</feature>
<feature type="topological domain" description="Mitochondrial intermembrane" evidence="2">
    <location>
        <begin position="714"/>
        <end position="716"/>
    </location>
</feature>
<feature type="domain" description="Miro 1" evidence="4">
    <location>
        <begin position="3"/>
        <end position="224"/>
    </location>
</feature>
<feature type="domain" description="EF-hand 1" evidence="3">
    <location>
        <begin position="240"/>
        <end position="275"/>
    </location>
</feature>
<feature type="domain" description="EF-hand 2" evidence="3">
    <location>
        <begin position="388"/>
        <end position="423"/>
    </location>
</feature>
<feature type="domain" description="Miro 2" evidence="4">
    <location>
        <begin position="505"/>
        <end position="671"/>
    </location>
</feature>
<feature type="region of interest" description="Disordered" evidence="5">
    <location>
        <begin position="58"/>
        <end position="99"/>
    </location>
</feature>
<feature type="region of interest" description="Disordered" evidence="5">
    <location>
        <begin position="303"/>
        <end position="327"/>
    </location>
</feature>
<feature type="binding site" evidence="2">
    <location>
        <begin position="84"/>
        <end position="91"/>
    </location>
    <ligand>
        <name>GTP</name>
        <dbReference type="ChEBI" id="CHEBI:37565"/>
        <label>1</label>
    </ligand>
</feature>
<feature type="binding site" evidence="2">
    <location>
        <begin position="113"/>
        <end position="115"/>
    </location>
    <ligand>
        <name>GTP</name>
        <dbReference type="ChEBI" id="CHEBI:37565"/>
        <label>1</label>
    </ligand>
</feature>
<feature type="binding site" evidence="2">
    <location>
        <begin position="167"/>
        <end position="170"/>
    </location>
    <ligand>
        <name>GTP</name>
        <dbReference type="ChEBI" id="CHEBI:37565"/>
        <label>1</label>
    </ligand>
</feature>
<feature type="binding site" evidence="3">
    <location>
        <position position="253"/>
    </location>
    <ligand>
        <name>Ca(2+)</name>
        <dbReference type="ChEBI" id="CHEBI:29108"/>
        <label>1</label>
    </ligand>
</feature>
<feature type="binding site" evidence="3">
    <location>
        <position position="255"/>
    </location>
    <ligand>
        <name>Ca(2+)</name>
        <dbReference type="ChEBI" id="CHEBI:29108"/>
        <label>1</label>
    </ligand>
</feature>
<feature type="binding site" evidence="3">
    <location>
        <position position="257"/>
    </location>
    <ligand>
        <name>Ca(2+)</name>
        <dbReference type="ChEBI" id="CHEBI:29108"/>
        <label>1</label>
    </ligand>
</feature>
<feature type="binding site" evidence="3">
    <location>
        <position position="259"/>
    </location>
    <ligand>
        <name>Ca(2+)</name>
        <dbReference type="ChEBI" id="CHEBI:29108"/>
        <label>1</label>
    </ligand>
</feature>
<feature type="binding site" evidence="3">
    <location>
        <position position="264"/>
    </location>
    <ligand>
        <name>Ca(2+)</name>
        <dbReference type="ChEBI" id="CHEBI:29108"/>
        <label>1</label>
    </ligand>
</feature>
<feature type="binding site" evidence="6">
    <location>
        <position position="401"/>
    </location>
    <ligand>
        <name>Ca(2+)</name>
        <dbReference type="ChEBI" id="CHEBI:29108"/>
        <label>2</label>
    </ligand>
</feature>
<feature type="binding site" evidence="6">
    <location>
        <position position="403"/>
    </location>
    <ligand>
        <name>Ca(2+)</name>
        <dbReference type="ChEBI" id="CHEBI:29108"/>
        <label>2</label>
    </ligand>
</feature>
<feature type="binding site" evidence="6">
    <location>
        <position position="405"/>
    </location>
    <ligand>
        <name>Ca(2+)</name>
        <dbReference type="ChEBI" id="CHEBI:29108"/>
        <label>2</label>
    </ligand>
</feature>
<feature type="binding site" evidence="6">
    <location>
        <position position="412"/>
    </location>
    <ligand>
        <name>Ca(2+)</name>
        <dbReference type="ChEBI" id="CHEBI:29108"/>
        <label>2</label>
    </ligand>
</feature>
<feature type="binding site" evidence="2">
    <location>
        <begin position="514"/>
        <end position="521"/>
    </location>
    <ligand>
        <name>GTP</name>
        <dbReference type="ChEBI" id="CHEBI:37565"/>
        <label>2</label>
    </ligand>
</feature>
<feature type="binding site" evidence="2">
    <location>
        <begin position="550"/>
        <end position="554"/>
    </location>
    <ligand>
        <name>GTP</name>
        <dbReference type="ChEBI" id="CHEBI:37565"/>
        <label>2</label>
    </ligand>
</feature>
<feature type="binding site" evidence="2">
    <location>
        <begin position="620"/>
        <end position="623"/>
    </location>
    <ligand>
        <name>GTP</name>
        <dbReference type="ChEBI" id="CHEBI:37565"/>
        <label>2</label>
    </ligand>
</feature>
<reference key="1">
    <citation type="journal article" date="2004" name="Proc. Natl. Acad. Sci. U.S.A.">
        <title>The diploid genome sequence of Candida albicans.</title>
        <authorList>
            <person name="Jones T."/>
            <person name="Federspiel N.A."/>
            <person name="Chibana H."/>
            <person name="Dungan J."/>
            <person name="Kalman S."/>
            <person name="Magee B.B."/>
            <person name="Newport G."/>
            <person name="Thorstenson Y.R."/>
            <person name="Agabian N."/>
            <person name="Magee P.T."/>
            <person name="Davis R.W."/>
            <person name="Scherer S."/>
        </authorList>
    </citation>
    <scope>NUCLEOTIDE SEQUENCE [LARGE SCALE GENOMIC DNA]</scope>
    <source>
        <strain>SC5314 / ATCC MYA-2876</strain>
    </source>
</reference>
<reference key="2">
    <citation type="journal article" date="2007" name="Genome Biol.">
        <title>Assembly of the Candida albicans genome into sixteen supercontigs aligned on the eight chromosomes.</title>
        <authorList>
            <person name="van het Hoog M."/>
            <person name="Rast T.J."/>
            <person name="Martchenko M."/>
            <person name="Grindle S."/>
            <person name="Dignard D."/>
            <person name="Hogues H."/>
            <person name="Cuomo C."/>
            <person name="Berriman M."/>
            <person name="Scherer S."/>
            <person name="Magee B.B."/>
            <person name="Whiteway M."/>
            <person name="Chibana H."/>
            <person name="Nantel A."/>
            <person name="Magee P.T."/>
        </authorList>
    </citation>
    <scope>GENOME REANNOTATION</scope>
    <source>
        <strain>SC5314 / ATCC MYA-2876</strain>
    </source>
</reference>
<reference key="3">
    <citation type="journal article" date="2013" name="Genome Biol.">
        <title>Assembly of a phased diploid Candida albicans genome facilitates allele-specific measurements and provides a simple model for repeat and indel structure.</title>
        <authorList>
            <person name="Muzzey D."/>
            <person name="Schwartz K."/>
            <person name="Weissman J.S."/>
            <person name="Sherlock G."/>
        </authorList>
    </citation>
    <scope>NUCLEOTIDE SEQUENCE [LARGE SCALE GENOMIC DNA]</scope>
    <scope>GENOME REANNOTATION</scope>
    <source>
        <strain>SC5314 / ATCC MYA-2876</strain>
    </source>
</reference>
<accession>Q5ABR2</accession>
<accession>A0A1D8PCC5</accession>
<accession>Q5ABF5</accession>
<evidence type="ECO:0000250" key="1">
    <source>
        <dbReference type="UniProtKB" id="P39722"/>
    </source>
</evidence>
<evidence type="ECO:0000255" key="2"/>
<evidence type="ECO:0000255" key="3">
    <source>
        <dbReference type="PROSITE-ProRule" id="PRU00448"/>
    </source>
</evidence>
<evidence type="ECO:0000255" key="4">
    <source>
        <dbReference type="PROSITE-ProRule" id="PRU00757"/>
    </source>
</evidence>
<evidence type="ECO:0000256" key="5">
    <source>
        <dbReference type="SAM" id="MobiDB-lite"/>
    </source>
</evidence>
<evidence type="ECO:0000305" key="6"/>
<organism>
    <name type="scientific">Candida albicans (strain SC5314 / ATCC MYA-2876)</name>
    <name type="common">Yeast</name>
    <dbReference type="NCBI Taxonomy" id="237561"/>
    <lineage>
        <taxon>Eukaryota</taxon>
        <taxon>Fungi</taxon>
        <taxon>Dikarya</taxon>
        <taxon>Ascomycota</taxon>
        <taxon>Saccharomycotina</taxon>
        <taxon>Pichiomycetes</taxon>
        <taxon>Debaryomycetaceae</taxon>
        <taxon>Candida/Lodderomyces clade</taxon>
        <taxon>Candida</taxon>
    </lineage>
</organism>
<keyword id="KW-0106">Calcium</keyword>
<keyword id="KW-0342">GTP-binding</keyword>
<keyword id="KW-0378">Hydrolase</keyword>
<keyword id="KW-0472">Membrane</keyword>
<keyword id="KW-0479">Metal-binding</keyword>
<keyword id="KW-0496">Mitochondrion</keyword>
<keyword id="KW-1000">Mitochondrion outer membrane</keyword>
<keyword id="KW-0547">Nucleotide-binding</keyword>
<keyword id="KW-1185">Reference proteome</keyword>
<keyword id="KW-0677">Repeat</keyword>
<keyword id="KW-0812">Transmembrane</keyword>
<keyword id="KW-1133">Transmembrane helix</keyword>